<gene>
    <name evidence="1" type="primary">atpH</name>
</gene>
<protein>
    <recommendedName>
        <fullName evidence="1">ATP synthase subunit delta</fullName>
    </recommendedName>
    <alternativeName>
        <fullName evidence="1">ATP synthase F(1) sector subunit delta</fullName>
    </alternativeName>
    <alternativeName>
        <fullName evidence="1">F-type ATPase subunit delta</fullName>
        <shortName evidence="1">F-ATPase subunit delta</shortName>
    </alternativeName>
</protein>
<organism>
    <name type="scientific">Geobacillus stearothermophilus</name>
    <name type="common">Bacillus stearothermophilus</name>
    <dbReference type="NCBI Taxonomy" id="1422"/>
    <lineage>
        <taxon>Bacteria</taxon>
        <taxon>Bacillati</taxon>
        <taxon>Bacillota</taxon>
        <taxon>Bacilli</taxon>
        <taxon>Bacillales</taxon>
        <taxon>Anoxybacillaceae</taxon>
        <taxon>Geobacillus</taxon>
    </lineage>
</organism>
<evidence type="ECO:0000255" key="1">
    <source>
        <dbReference type="HAMAP-Rule" id="MF_01416"/>
    </source>
</evidence>
<dbReference type="EMBL" id="D38060">
    <property type="protein sequence ID" value="BAA07252.1"/>
    <property type="molecule type" value="Genomic_DNA"/>
</dbReference>
<dbReference type="RefSeq" id="WP_061580742.1">
    <property type="nucleotide sequence ID" value="NZ_LQYY01000082.1"/>
</dbReference>
<dbReference type="SMR" id="P42008"/>
<dbReference type="GO" id="GO:0005886">
    <property type="term" value="C:plasma membrane"/>
    <property type="evidence" value="ECO:0007669"/>
    <property type="project" value="UniProtKB-SubCell"/>
</dbReference>
<dbReference type="GO" id="GO:0045259">
    <property type="term" value="C:proton-transporting ATP synthase complex"/>
    <property type="evidence" value="ECO:0007669"/>
    <property type="project" value="UniProtKB-KW"/>
</dbReference>
<dbReference type="GO" id="GO:0046933">
    <property type="term" value="F:proton-transporting ATP synthase activity, rotational mechanism"/>
    <property type="evidence" value="ECO:0007669"/>
    <property type="project" value="UniProtKB-UniRule"/>
</dbReference>
<dbReference type="Gene3D" id="1.10.520.20">
    <property type="entry name" value="N-terminal domain of the delta subunit of the F1F0-ATP synthase"/>
    <property type="match status" value="1"/>
</dbReference>
<dbReference type="HAMAP" id="MF_01416">
    <property type="entry name" value="ATP_synth_delta_bact"/>
    <property type="match status" value="1"/>
</dbReference>
<dbReference type="InterPro" id="IPR026015">
    <property type="entry name" value="ATP_synth_OSCP/delta_N_sf"/>
</dbReference>
<dbReference type="InterPro" id="IPR020781">
    <property type="entry name" value="ATPase_OSCP/d_CS"/>
</dbReference>
<dbReference type="InterPro" id="IPR000711">
    <property type="entry name" value="ATPase_OSCP/dsu"/>
</dbReference>
<dbReference type="NCBIfam" id="TIGR01145">
    <property type="entry name" value="ATP_synt_delta"/>
    <property type="match status" value="1"/>
</dbReference>
<dbReference type="NCBIfam" id="NF004403">
    <property type="entry name" value="PRK05758.2-4"/>
    <property type="match status" value="1"/>
</dbReference>
<dbReference type="PANTHER" id="PTHR11910">
    <property type="entry name" value="ATP SYNTHASE DELTA CHAIN"/>
    <property type="match status" value="1"/>
</dbReference>
<dbReference type="Pfam" id="PF00213">
    <property type="entry name" value="OSCP"/>
    <property type="match status" value="1"/>
</dbReference>
<dbReference type="PRINTS" id="PR00125">
    <property type="entry name" value="ATPASEDELTA"/>
</dbReference>
<dbReference type="SUPFAM" id="SSF47928">
    <property type="entry name" value="N-terminal domain of the delta subunit of the F1F0-ATP synthase"/>
    <property type="match status" value="1"/>
</dbReference>
<dbReference type="PROSITE" id="PS00389">
    <property type="entry name" value="ATPASE_DELTA"/>
    <property type="match status" value="1"/>
</dbReference>
<reference key="1">
    <citation type="submission" date="1994-08" db="EMBL/GenBank/DDBJ databases">
        <authorList>
            <person name="Ishizuka M."/>
            <person name="Imai H."/>
        </authorList>
    </citation>
    <scope>NUCLEOTIDE SEQUENCE [GENOMIC DNA]</scope>
</reference>
<sequence length="178" mass="19698">MNQEVIAKRYASALFQIALEQQQLDRIEEDVRAVRQALAENGEFLSLLSNPNLSLEKKKALVREVFAGVSAPVKNTLLLLLERHRFGLVPELADQFIALANDARGIAEAIAYSARPLTDEELQALSDVFAKKVGKATLHIENIVEPELIGGVKLRIGNRIYDGSVSGQLERIQRQLIG</sequence>
<name>ATPD_GEOSE</name>
<comment type="function">
    <text evidence="1">F(1)F(0) ATP synthase produces ATP from ADP in the presence of a proton or sodium gradient. F-type ATPases consist of two structural domains, F(1) containing the extramembraneous catalytic core and F(0) containing the membrane proton channel, linked together by a central stalk and a peripheral stalk. During catalysis, ATP synthesis in the catalytic domain of F(1) is coupled via a rotary mechanism of the central stalk subunits to proton translocation.</text>
</comment>
<comment type="function">
    <text evidence="1">This protein is part of the stalk that links CF(0) to CF(1). It either transmits conformational changes from CF(0) to CF(1) or is implicated in proton conduction.</text>
</comment>
<comment type="subunit">
    <text evidence="1">F-type ATPases have 2 components, F(1) - the catalytic core - and F(0) - the membrane proton channel. F(1) has five subunits: alpha(3), beta(3), gamma(1), delta(1), epsilon(1). F(0) has three main subunits: a(1), b(2) and c(10-14). The alpha and beta chains form an alternating ring which encloses part of the gamma chain. F(1) is attached to F(0) by a central stalk formed by the gamma and epsilon chains, while a peripheral stalk is formed by the delta and b chains.</text>
</comment>
<comment type="subcellular location">
    <subcellularLocation>
        <location evidence="1">Cell membrane</location>
        <topology evidence="1">Peripheral membrane protein</topology>
    </subcellularLocation>
</comment>
<comment type="similarity">
    <text evidence="1">Belongs to the ATPase delta chain family.</text>
</comment>
<proteinExistence type="inferred from homology"/>
<keyword id="KW-0066">ATP synthesis</keyword>
<keyword id="KW-1003">Cell membrane</keyword>
<keyword id="KW-0139">CF(1)</keyword>
<keyword id="KW-0375">Hydrogen ion transport</keyword>
<keyword id="KW-0406">Ion transport</keyword>
<keyword id="KW-0472">Membrane</keyword>
<keyword id="KW-0813">Transport</keyword>
<accession>P42008</accession>
<feature type="chain" id="PRO_0000193457" description="ATP synthase subunit delta">
    <location>
        <begin position="1"/>
        <end position="178"/>
    </location>
</feature>